<sequence length="28" mass="2949">VGCEECPMHCKGKHAVPTCDDGVCNCNV</sequence>
<protein>
    <recommendedName>
        <fullName evidence="4">Potassium channel toxin alpha-KTx 9.5</fullName>
    </recommendedName>
    <alternativeName>
        <fullName evidence="3">Kbot1</fullName>
    </alternativeName>
</protein>
<accession>P84744</accession>
<evidence type="ECO:0000250" key="1">
    <source>
        <dbReference type="UniProtKB" id="Q9NJP7"/>
    </source>
</evidence>
<evidence type="ECO:0000269" key="2">
    <source>
    </source>
</evidence>
<evidence type="ECO:0000303" key="3">
    <source>
    </source>
</evidence>
<evidence type="ECO:0000305" key="4"/>
<evidence type="ECO:0000305" key="5">
    <source>
    </source>
</evidence>
<dbReference type="SMR" id="P84744"/>
<dbReference type="GO" id="GO:0005576">
    <property type="term" value="C:extracellular region"/>
    <property type="evidence" value="ECO:0000303"/>
    <property type="project" value="UniProtKB"/>
</dbReference>
<dbReference type="GO" id="GO:0019870">
    <property type="term" value="F:potassium channel inhibitor activity"/>
    <property type="evidence" value="ECO:0000314"/>
    <property type="project" value="UniProtKB"/>
</dbReference>
<dbReference type="GO" id="GO:0090729">
    <property type="term" value="F:toxin activity"/>
    <property type="evidence" value="ECO:0007669"/>
    <property type="project" value="UniProtKB-KW"/>
</dbReference>
<dbReference type="GO" id="GO:0043267">
    <property type="term" value="P:negative regulation of potassium ion transport"/>
    <property type="evidence" value="ECO:0000314"/>
    <property type="project" value="UniProtKB"/>
</dbReference>
<dbReference type="InterPro" id="IPR036574">
    <property type="entry name" value="Scorpion_toxin-like_sf"/>
</dbReference>
<dbReference type="InterPro" id="IPR008911">
    <property type="entry name" value="Toxin_alpha-KTx_8/9"/>
</dbReference>
<dbReference type="Pfam" id="PF05453">
    <property type="entry name" value="Toxin_6"/>
    <property type="match status" value="1"/>
</dbReference>
<dbReference type="SUPFAM" id="SSF57095">
    <property type="entry name" value="Scorpion toxin-like"/>
    <property type="match status" value="1"/>
</dbReference>
<feature type="peptide" id="PRO_0000045198" description="Potassium channel toxin alpha-KTx 9.5" evidence="2">
    <location>
        <begin position="1"/>
        <end position="28"/>
    </location>
</feature>
<feature type="modified residue" description="Valine amide" evidence="2">
    <location>
        <position position="28"/>
    </location>
</feature>
<feature type="disulfide bond" evidence="1">
    <location>
        <begin position="3"/>
        <end position="19"/>
    </location>
</feature>
<feature type="disulfide bond" evidence="1">
    <location>
        <begin position="6"/>
        <end position="24"/>
    </location>
</feature>
<feature type="disulfide bond" evidence="1">
    <location>
        <begin position="10"/>
        <end position="26"/>
    </location>
</feature>
<reference key="1">
    <citation type="journal article" date="2004" name="Peptides">
        <title>Kbot1, a three disulfide bridges toxin from Buthus occitanus tunetanus venom highly active on both SK and Kv channels.</title>
        <authorList>
            <person name="Mahjoubi-Boubaker B."/>
            <person name="Crest M."/>
            <person name="Khalifa R.B."/>
            <person name="Ayeb M.E."/>
            <person name="Kharrat R."/>
        </authorList>
    </citation>
    <scope>PROTEIN SEQUENCE</scope>
    <scope>FUNCTION</scope>
    <scope>SUBCELLULAR LOCATION</scope>
    <scope>AMIDATION AT VAL-28</scope>
    <scope>MASS SPECTROMETRY</scope>
    <source>
        <tissue>Venom</tissue>
    </source>
</reference>
<name>KAX95_BUTOC</name>
<keyword id="KW-0027">Amidation</keyword>
<keyword id="KW-1221">Calcium-activated potassium channel impairing toxin</keyword>
<keyword id="KW-0903">Direct protein sequencing</keyword>
<keyword id="KW-1015">Disulfide bond</keyword>
<keyword id="KW-0872">Ion channel impairing toxin</keyword>
<keyword id="KW-0528">Neurotoxin</keyword>
<keyword id="KW-0632">Potassium channel impairing toxin</keyword>
<keyword id="KW-0964">Secreted</keyword>
<keyword id="KW-0800">Toxin</keyword>
<keyword id="KW-1220">Voltage-gated potassium channel impairing toxin</keyword>
<proteinExistence type="evidence at protein level"/>
<organism>
    <name type="scientific">Buthus occitanus tunetanus</name>
    <name type="common">Common European scorpion</name>
    <name type="synonym">Buthus tunetanus</name>
    <dbReference type="NCBI Taxonomy" id="6871"/>
    <lineage>
        <taxon>Eukaryota</taxon>
        <taxon>Metazoa</taxon>
        <taxon>Ecdysozoa</taxon>
        <taxon>Arthropoda</taxon>
        <taxon>Chelicerata</taxon>
        <taxon>Arachnida</taxon>
        <taxon>Scorpiones</taxon>
        <taxon>Buthida</taxon>
        <taxon>Buthoidea</taxon>
        <taxon>Buthidae</taxon>
        <taxon>Buthus</taxon>
    </lineage>
</organism>
<comment type="function">
    <text evidence="2">Blocks voltage-gated potassium channels Kv1.1/KCNA1 (IC(50)=145 nM), Kv1.2/KCNA2 (IC(50)=2.5 nM), and Kv1.3/KCNA3 (IC(50)=15). Also inhibits calcium-activated potassium channels (KCa/KCNN).</text>
</comment>
<comment type="subcellular location">
    <subcellularLocation>
        <location evidence="2">Secreted</location>
    </subcellularLocation>
</comment>
<comment type="tissue specificity">
    <text evidence="5">Expressed by the venom gland.</text>
</comment>
<comment type="domain">
    <text evidence="1">Has the structural arrangement of an alpha-helix connected to a beta-sheet by disulfide bonds (CSalpha/beta).</text>
</comment>
<comment type="mass spectrometry" mass="2942.58" method="MALDI" evidence="2"/>
<comment type="similarity">
    <text evidence="4">Belongs to the short scorpion toxin superfamily. Potassium channel inhibitor family. Alpha-KTx 09 subfamily.</text>
</comment>